<accession>Q3ADA6</accession>
<sequence length="354" mass="39156">MSKIRVLIVDDSALMRKYLREILEQDPEIEVIAVARNGREAVEKALELSPDVITMDINMPEMDGLTAIQYIMLHRPTPIIVISSLTQKGALTTFEALELGAVDYVAKPDGTVSLKIKEVAEEILQKVKAVAKSRGVVRLKARKERPFVQEVPKTRPVSPDTSFKKLILIGVSTGGPKALMEIIPRLPGNLDASVVIIQHMPEKFTASFAARLNNYSELYVKEAEDGESLERGKVLVARGGINLKLERKLGINVVRVRYTPLPRETIYWPSVDVAFRSALTVIEPHRIIAVLLTGMGDDGAQAMVEIKQKGGYTIAESEETAVVWGMPREAIERGGASEILPVYQIADRIVELVR</sequence>
<reference key="1">
    <citation type="journal article" date="2005" name="PLoS Genet.">
        <title>Life in hot carbon monoxide: the complete genome sequence of Carboxydothermus hydrogenoformans Z-2901.</title>
        <authorList>
            <person name="Wu M."/>
            <person name="Ren Q."/>
            <person name="Durkin A.S."/>
            <person name="Daugherty S.C."/>
            <person name="Brinkac L.M."/>
            <person name="Dodson R.J."/>
            <person name="Madupu R."/>
            <person name="Sullivan S.A."/>
            <person name="Kolonay J.F."/>
            <person name="Nelson W.C."/>
            <person name="Tallon L.J."/>
            <person name="Jones K.M."/>
            <person name="Ulrich L.E."/>
            <person name="Gonzalez J.M."/>
            <person name="Zhulin I.B."/>
            <person name="Robb F.T."/>
            <person name="Eisen J.A."/>
        </authorList>
    </citation>
    <scope>NUCLEOTIDE SEQUENCE [LARGE SCALE GENOMIC DNA]</scope>
    <source>
        <strain>ATCC BAA-161 / DSM 6008 / Z-2901</strain>
    </source>
</reference>
<gene>
    <name evidence="1" type="primary">cheB2</name>
    <name type="ordered locus">CHY_1031</name>
</gene>
<protein>
    <recommendedName>
        <fullName evidence="1">Protein-glutamate methylesterase/protein-glutamine glutaminase 2</fullName>
        <ecNumber evidence="1">3.1.1.61</ecNumber>
        <ecNumber evidence="1">3.5.1.44</ecNumber>
    </recommendedName>
</protein>
<organism>
    <name type="scientific">Carboxydothermus hydrogenoformans (strain ATCC BAA-161 / DSM 6008 / Z-2901)</name>
    <dbReference type="NCBI Taxonomy" id="246194"/>
    <lineage>
        <taxon>Bacteria</taxon>
        <taxon>Bacillati</taxon>
        <taxon>Bacillota</taxon>
        <taxon>Clostridia</taxon>
        <taxon>Thermoanaerobacterales</taxon>
        <taxon>Thermoanaerobacteraceae</taxon>
        <taxon>Carboxydothermus</taxon>
    </lineage>
</organism>
<keyword id="KW-0145">Chemotaxis</keyword>
<keyword id="KW-0963">Cytoplasm</keyword>
<keyword id="KW-0378">Hydrolase</keyword>
<keyword id="KW-0597">Phosphoprotein</keyword>
<keyword id="KW-1185">Reference proteome</keyword>
<proteinExistence type="inferred from homology"/>
<comment type="function">
    <text evidence="1">Involved in chemotaxis. Part of a chemotaxis signal transduction system that modulates chemotaxis in response to various stimuli. Catalyzes the demethylation of specific methylglutamate residues introduced into the chemoreceptors (methyl-accepting chemotaxis proteins or MCP) by CheR. Also mediates the irreversible deamidation of specific glutamine residues to glutamic acid.</text>
</comment>
<comment type="catalytic activity">
    <reaction evidence="1">
        <text>[protein]-L-glutamate 5-O-methyl ester + H2O = L-glutamyl-[protein] + methanol + H(+)</text>
        <dbReference type="Rhea" id="RHEA:23236"/>
        <dbReference type="Rhea" id="RHEA-COMP:10208"/>
        <dbReference type="Rhea" id="RHEA-COMP:10311"/>
        <dbReference type="ChEBI" id="CHEBI:15377"/>
        <dbReference type="ChEBI" id="CHEBI:15378"/>
        <dbReference type="ChEBI" id="CHEBI:17790"/>
        <dbReference type="ChEBI" id="CHEBI:29973"/>
        <dbReference type="ChEBI" id="CHEBI:82795"/>
        <dbReference type="EC" id="3.1.1.61"/>
    </reaction>
</comment>
<comment type="catalytic activity">
    <reaction evidence="1">
        <text>L-glutaminyl-[protein] + H2O = L-glutamyl-[protein] + NH4(+)</text>
        <dbReference type="Rhea" id="RHEA:16441"/>
        <dbReference type="Rhea" id="RHEA-COMP:10207"/>
        <dbReference type="Rhea" id="RHEA-COMP:10208"/>
        <dbReference type="ChEBI" id="CHEBI:15377"/>
        <dbReference type="ChEBI" id="CHEBI:28938"/>
        <dbReference type="ChEBI" id="CHEBI:29973"/>
        <dbReference type="ChEBI" id="CHEBI:30011"/>
        <dbReference type="EC" id="3.5.1.44"/>
    </reaction>
</comment>
<comment type="subcellular location">
    <subcellularLocation>
        <location evidence="1">Cytoplasm</location>
    </subcellularLocation>
</comment>
<comment type="domain">
    <text evidence="1">Contains a C-terminal catalytic domain, and an N-terminal region which modulates catalytic activity.</text>
</comment>
<comment type="PTM">
    <text evidence="1">Phosphorylated by CheA. Phosphorylation of the N-terminal regulatory domain activates the methylesterase activity.</text>
</comment>
<comment type="similarity">
    <text evidence="1">Belongs to the CheB family.</text>
</comment>
<evidence type="ECO:0000255" key="1">
    <source>
        <dbReference type="HAMAP-Rule" id="MF_00099"/>
    </source>
</evidence>
<dbReference type="EC" id="3.1.1.61" evidence="1"/>
<dbReference type="EC" id="3.5.1.44" evidence="1"/>
<dbReference type="EMBL" id="CP000141">
    <property type="protein sequence ID" value="ABB14613.1"/>
    <property type="molecule type" value="Genomic_DNA"/>
</dbReference>
<dbReference type="RefSeq" id="WP_011343954.1">
    <property type="nucleotide sequence ID" value="NC_007503.1"/>
</dbReference>
<dbReference type="SMR" id="Q3ADA6"/>
<dbReference type="FunCoup" id="Q3ADA6">
    <property type="interactions" value="157"/>
</dbReference>
<dbReference type="STRING" id="246194.CHY_1031"/>
<dbReference type="KEGG" id="chy:CHY_1031"/>
<dbReference type="eggNOG" id="COG2201">
    <property type="taxonomic scope" value="Bacteria"/>
</dbReference>
<dbReference type="HOGENOM" id="CLU_000445_51_0_9"/>
<dbReference type="InParanoid" id="Q3ADA6"/>
<dbReference type="OrthoDB" id="9793421at2"/>
<dbReference type="Proteomes" id="UP000002706">
    <property type="component" value="Chromosome"/>
</dbReference>
<dbReference type="GO" id="GO:0005737">
    <property type="term" value="C:cytoplasm"/>
    <property type="evidence" value="ECO:0007669"/>
    <property type="project" value="UniProtKB-SubCell"/>
</dbReference>
<dbReference type="GO" id="GO:0000156">
    <property type="term" value="F:phosphorelay response regulator activity"/>
    <property type="evidence" value="ECO:0007669"/>
    <property type="project" value="InterPro"/>
</dbReference>
<dbReference type="GO" id="GO:0008984">
    <property type="term" value="F:protein-glutamate methylesterase activity"/>
    <property type="evidence" value="ECO:0007669"/>
    <property type="project" value="UniProtKB-UniRule"/>
</dbReference>
<dbReference type="GO" id="GO:0050568">
    <property type="term" value="F:protein-glutamine glutaminase activity"/>
    <property type="evidence" value="ECO:0007669"/>
    <property type="project" value="UniProtKB-UniRule"/>
</dbReference>
<dbReference type="GO" id="GO:0006935">
    <property type="term" value="P:chemotaxis"/>
    <property type="evidence" value="ECO:0007669"/>
    <property type="project" value="UniProtKB-UniRule"/>
</dbReference>
<dbReference type="CDD" id="cd16432">
    <property type="entry name" value="CheB_Rec"/>
    <property type="match status" value="1"/>
</dbReference>
<dbReference type="CDD" id="cd17541">
    <property type="entry name" value="REC_CheB-like"/>
    <property type="match status" value="1"/>
</dbReference>
<dbReference type="Gene3D" id="3.40.50.2300">
    <property type="match status" value="1"/>
</dbReference>
<dbReference type="Gene3D" id="3.40.50.180">
    <property type="entry name" value="Methylesterase CheB, C-terminal domain"/>
    <property type="match status" value="1"/>
</dbReference>
<dbReference type="HAMAP" id="MF_00099">
    <property type="entry name" value="CheB_chemtxs"/>
    <property type="match status" value="1"/>
</dbReference>
<dbReference type="InterPro" id="IPR008248">
    <property type="entry name" value="CheB-like"/>
</dbReference>
<dbReference type="InterPro" id="IPR035909">
    <property type="entry name" value="CheB_C"/>
</dbReference>
<dbReference type="InterPro" id="IPR011006">
    <property type="entry name" value="CheY-like_superfamily"/>
</dbReference>
<dbReference type="InterPro" id="IPR000673">
    <property type="entry name" value="Sig_transdc_resp-reg_Me-estase"/>
</dbReference>
<dbReference type="InterPro" id="IPR001789">
    <property type="entry name" value="Sig_transdc_resp-reg_receiver"/>
</dbReference>
<dbReference type="NCBIfam" id="NF001965">
    <property type="entry name" value="PRK00742.1"/>
    <property type="match status" value="1"/>
</dbReference>
<dbReference type="NCBIfam" id="NF009206">
    <property type="entry name" value="PRK12555.1"/>
    <property type="match status" value="1"/>
</dbReference>
<dbReference type="PANTHER" id="PTHR42872">
    <property type="entry name" value="PROTEIN-GLUTAMATE METHYLESTERASE/PROTEIN-GLUTAMINE GLUTAMINASE"/>
    <property type="match status" value="1"/>
</dbReference>
<dbReference type="PANTHER" id="PTHR42872:SF6">
    <property type="entry name" value="PROTEIN-GLUTAMATE METHYLESTERASE_PROTEIN-GLUTAMINE GLUTAMINASE"/>
    <property type="match status" value="1"/>
</dbReference>
<dbReference type="Pfam" id="PF01339">
    <property type="entry name" value="CheB_methylest"/>
    <property type="match status" value="1"/>
</dbReference>
<dbReference type="Pfam" id="PF00072">
    <property type="entry name" value="Response_reg"/>
    <property type="match status" value="1"/>
</dbReference>
<dbReference type="PIRSF" id="PIRSF000876">
    <property type="entry name" value="RR_chemtxs_CheB"/>
    <property type="match status" value="1"/>
</dbReference>
<dbReference type="SMART" id="SM00448">
    <property type="entry name" value="REC"/>
    <property type="match status" value="1"/>
</dbReference>
<dbReference type="SUPFAM" id="SSF52172">
    <property type="entry name" value="CheY-like"/>
    <property type="match status" value="1"/>
</dbReference>
<dbReference type="SUPFAM" id="SSF52738">
    <property type="entry name" value="Methylesterase CheB, C-terminal domain"/>
    <property type="match status" value="1"/>
</dbReference>
<dbReference type="PROSITE" id="PS50122">
    <property type="entry name" value="CHEB"/>
    <property type="match status" value="1"/>
</dbReference>
<dbReference type="PROSITE" id="PS50110">
    <property type="entry name" value="RESPONSE_REGULATORY"/>
    <property type="match status" value="1"/>
</dbReference>
<name>CHEB2_CARHZ</name>
<feature type="chain" id="PRO_0000225453" description="Protein-glutamate methylesterase/protein-glutamine glutaminase 2">
    <location>
        <begin position="1"/>
        <end position="354"/>
    </location>
</feature>
<feature type="domain" description="Response regulatory" evidence="1">
    <location>
        <begin position="5"/>
        <end position="122"/>
    </location>
</feature>
<feature type="domain" description="CheB-type methylesterase" evidence="1">
    <location>
        <begin position="159"/>
        <end position="354"/>
    </location>
</feature>
<feature type="active site" evidence="1">
    <location>
        <position position="172"/>
    </location>
</feature>
<feature type="active site" evidence="1">
    <location>
        <position position="199"/>
    </location>
</feature>
<feature type="active site" evidence="1">
    <location>
        <position position="298"/>
    </location>
</feature>
<feature type="modified residue" description="4-aspartylphosphate" evidence="1">
    <location>
        <position position="56"/>
    </location>
</feature>